<reference key="1">
    <citation type="journal article" date="2010" name="Genome Biol.">
        <title>Structure and dynamics of the pan-genome of Streptococcus pneumoniae and closely related species.</title>
        <authorList>
            <person name="Donati C."/>
            <person name="Hiller N.L."/>
            <person name="Tettelin H."/>
            <person name="Muzzi A."/>
            <person name="Croucher N.J."/>
            <person name="Angiuoli S.V."/>
            <person name="Oggioni M."/>
            <person name="Dunning Hotopp J.C."/>
            <person name="Hu F.Z."/>
            <person name="Riley D.R."/>
            <person name="Covacci A."/>
            <person name="Mitchell T.J."/>
            <person name="Bentley S.D."/>
            <person name="Kilian M."/>
            <person name="Ehrlich G.D."/>
            <person name="Rappuoli R."/>
            <person name="Moxon E.R."/>
            <person name="Masignani V."/>
        </authorList>
    </citation>
    <scope>NUCLEOTIDE SEQUENCE [LARGE SCALE GENOMIC DNA]</scope>
    <source>
        <strain>JJA</strain>
    </source>
</reference>
<evidence type="ECO:0000255" key="1">
    <source>
        <dbReference type="HAMAP-Rule" id="MF_01145"/>
    </source>
</evidence>
<gene>
    <name evidence="1" type="primary">prsA</name>
    <name type="ordered locus">SPJ_0922</name>
</gene>
<organism>
    <name type="scientific">Streptococcus pneumoniae (strain JJA)</name>
    <dbReference type="NCBI Taxonomy" id="488222"/>
    <lineage>
        <taxon>Bacteria</taxon>
        <taxon>Bacillati</taxon>
        <taxon>Bacillota</taxon>
        <taxon>Bacilli</taxon>
        <taxon>Lactobacillales</taxon>
        <taxon>Streptococcaceae</taxon>
        <taxon>Streptococcus</taxon>
    </lineage>
</organism>
<accession>C1CDX6</accession>
<protein>
    <recommendedName>
        <fullName evidence="1">Foldase protein PrsA</fullName>
        <ecNumber evidence="1">5.2.1.8</ecNumber>
    </recommendedName>
</protein>
<keyword id="KW-1003">Cell membrane</keyword>
<keyword id="KW-0413">Isomerase</keyword>
<keyword id="KW-0449">Lipoprotein</keyword>
<keyword id="KW-0472">Membrane</keyword>
<keyword id="KW-0564">Palmitate</keyword>
<keyword id="KW-0697">Rotamase</keyword>
<keyword id="KW-0732">Signal</keyword>
<feature type="signal peptide" evidence="1">
    <location>
        <begin position="1"/>
        <end position="20"/>
    </location>
</feature>
<feature type="chain" id="PRO_1000164117" description="Foldase protein PrsA">
    <location>
        <begin position="21"/>
        <end position="313"/>
    </location>
</feature>
<feature type="domain" description="PpiC" evidence="1">
    <location>
        <begin position="143"/>
        <end position="241"/>
    </location>
</feature>
<feature type="lipid moiety-binding region" description="N-palmitoyl cysteine" evidence="1">
    <location>
        <position position="21"/>
    </location>
</feature>
<feature type="lipid moiety-binding region" description="S-diacylglycerol cysteine" evidence="1">
    <location>
        <position position="21"/>
    </location>
</feature>
<proteinExistence type="inferred from homology"/>
<sequence length="313" mass="34440">MKKKLLAGAITLLSVATLAACSKGSEGADLISMKGDVITEHQFYEQVKNNPSAQQVLLNMTIQKVFEKQYGSELDDKEVDDTIAEEKKQYGENYQRVLSQAGMTLETRKAQIRTSKLVELAVKKVAEAELTDEAYKKAFDEYTPDVTAQIIRLNNEDKAKEVLEKAKAEGADFAQLAKDNSTDEKTKENGGEITFDSASTEVPEQVKKAAFALDVDGVSDVITATGTQAYSSQYYIVKLTKKTEKSSNIDDYKEKLKTVILTQKQNDSTFVQSIIGKELQAANIKVKDQAFQNIFTQYIGGGDSSSSSSTSNE</sequence>
<dbReference type="EC" id="5.2.1.8" evidence="1"/>
<dbReference type="EMBL" id="CP000919">
    <property type="protein sequence ID" value="ACO19338.1"/>
    <property type="molecule type" value="Genomic_DNA"/>
</dbReference>
<dbReference type="RefSeq" id="WP_000727935.1">
    <property type="nucleotide sequence ID" value="NC_012466.1"/>
</dbReference>
<dbReference type="SMR" id="C1CDX6"/>
<dbReference type="KEGG" id="sjj:SPJ_0922"/>
<dbReference type="HOGENOM" id="CLU_034646_6_0_9"/>
<dbReference type="Proteomes" id="UP000002206">
    <property type="component" value="Chromosome"/>
</dbReference>
<dbReference type="GO" id="GO:0005886">
    <property type="term" value="C:plasma membrane"/>
    <property type="evidence" value="ECO:0007669"/>
    <property type="project" value="UniProtKB-SubCell"/>
</dbReference>
<dbReference type="GO" id="GO:0003755">
    <property type="term" value="F:peptidyl-prolyl cis-trans isomerase activity"/>
    <property type="evidence" value="ECO:0007669"/>
    <property type="project" value="UniProtKB-UniRule"/>
</dbReference>
<dbReference type="GO" id="GO:0006457">
    <property type="term" value="P:protein folding"/>
    <property type="evidence" value="ECO:0007669"/>
    <property type="project" value="UniProtKB-UniRule"/>
</dbReference>
<dbReference type="Gene3D" id="3.10.50.40">
    <property type="match status" value="1"/>
</dbReference>
<dbReference type="HAMAP" id="MF_01145">
    <property type="entry name" value="Foldase_PrsA"/>
    <property type="match status" value="1"/>
</dbReference>
<dbReference type="InterPro" id="IPR023059">
    <property type="entry name" value="Foldase_PrsA"/>
</dbReference>
<dbReference type="InterPro" id="IPR046357">
    <property type="entry name" value="PPIase_dom_sf"/>
</dbReference>
<dbReference type="InterPro" id="IPR000297">
    <property type="entry name" value="PPIase_PpiC"/>
</dbReference>
<dbReference type="InterPro" id="IPR050245">
    <property type="entry name" value="PrsA_foldase"/>
</dbReference>
<dbReference type="InterPro" id="IPR027304">
    <property type="entry name" value="Trigger_fact/SurA_dom_sf"/>
</dbReference>
<dbReference type="NCBIfam" id="NF002361">
    <property type="entry name" value="PRK01326.1"/>
    <property type="match status" value="1"/>
</dbReference>
<dbReference type="PANTHER" id="PTHR47245:SF1">
    <property type="entry name" value="FOLDASE PROTEIN PRSA"/>
    <property type="match status" value="1"/>
</dbReference>
<dbReference type="PANTHER" id="PTHR47245">
    <property type="entry name" value="PEPTIDYLPROLYL ISOMERASE"/>
    <property type="match status" value="1"/>
</dbReference>
<dbReference type="Pfam" id="PF00639">
    <property type="entry name" value="Rotamase"/>
    <property type="match status" value="1"/>
</dbReference>
<dbReference type="SUPFAM" id="SSF54534">
    <property type="entry name" value="FKBP-like"/>
    <property type="match status" value="1"/>
</dbReference>
<dbReference type="SUPFAM" id="SSF109998">
    <property type="entry name" value="Triger factor/SurA peptide-binding domain-like"/>
    <property type="match status" value="1"/>
</dbReference>
<dbReference type="PROSITE" id="PS50198">
    <property type="entry name" value="PPIC_PPIASE_2"/>
    <property type="match status" value="1"/>
</dbReference>
<dbReference type="PROSITE" id="PS51257">
    <property type="entry name" value="PROKAR_LIPOPROTEIN"/>
    <property type="match status" value="1"/>
</dbReference>
<comment type="function">
    <text evidence="1">Plays a major role in protein secretion by helping the post-translocational extracellular folding of several secreted proteins.</text>
</comment>
<comment type="catalytic activity">
    <reaction evidence="1">
        <text>[protein]-peptidylproline (omega=180) = [protein]-peptidylproline (omega=0)</text>
        <dbReference type="Rhea" id="RHEA:16237"/>
        <dbReference type="Rhea" id="RHEA-COMP:10747"/>
        <dbReference type="Rhea" id="RHEA-COMP:10748"/>
        <dbReference type="ChEBI" id="CHEBI:83833"/>
        <dbReference type="ChEBI" id="CHEBI:83834"/>
        <dbReference type="EC" id="5.2.1.8"/>
    </reaction>
</comment>
<comment type="subcellular location">
    <subcellularLocation>
        <location evidence="1">Cell membrane</location>
        <topology evidence="1">Lipid-anchor</topology>
    </subcellularLocation>
</comment>
<comment type="similarity">
    <text evidence="1">Belongs to the PrsA family.</text>
</comment>
<name>PRSA_STRZJ</name>